<keyword id="KW-0067">ATP-binding</keyword>
<keyword id="KW-0315">Glutamine amidotransferase</keyword>
<keyword id="KW-0436">Ligase</keyword>
<keyword id="KW-0460">Magnesium</keyword>
<keyword id="KW-0479">Metal-binding</keyword>
<keyword id="KW-0547">Nucleotide-binding</keyword>
<keyword id="KW-0665">Pyrimidine biosynthesis</keyword>
<organism>
    <name type="scientific">Bacillus cereus (strain G9842)</name>
    <dbReference type="NCBI Taxonomy" id="405531"/>
    <lineage>
        <taxon>Bacteria</taxon>
        <taxon>Bacillati</taxon>
        <taxon>Bacillota</taxon>
        <taxon>Bacilli</taxon>
        <taxon>Bacillales</taxon>
        <taxon>Bacillaceae</taxon>
        <taxon>Bacillus</taxon>
        <taxon>Bacillus cereus group</taxon>
    </lineage>
</organism>
<reference key="1">
    <citation type="submission" date="2008-10" db="EMBL/GenBank/DDBJ databases">
        <title>Genome sequence of Bacillus cereus G9842.</title>
        <authorList>
            <person name="Dodson R.J."/>
            <person name="Durkin A.S."/>
            <person name="Rosovitz M.J."/>
            <person name="Rasko D.A."/>
            <person name="Hoffmaster A."/>
            <person name="Ravel J."/>
            <person name="Sutton G."/>
        </authorList>
    </citation>
    <scope>NUCLEOTIDE SEQUENCE [LARGE SCALE GENOMIC DNA]</scope>
    <source>
        <strain>G9842</strain>
    </source>
</reference>
<feature type="chain" id="PRO_1000139380" description="CTP synthase">
    <location>
        <begin position="1"/>
        <end position="535"/>
    </location>
</feature>
<feature type="domain" description="Glutamine amidotransferase type-1" evidence="1">
    <location>
        <begin position="292"/>
        <end position="534"/>
    </location>
</feature>
<feature type="region of interest" description="Amidoligase domain" evidence="1">
    <location>
        <begin position="1"/>
        <end position="267"/>
    </location>
</feature>
<feature type="active site" description="Nucleophile; for glutamine hydrolysis" evidence="1">
    <location>
        <position position="381"/>
    </location>
</feature>
<feature type="active site" evidence="1">
    <location>
        <position position="507"/>
    </location>
</feature>
<feature type="active site" evidence="1">
    <location>
        <position position="509"/>
    </location>
</feature>
<feature type="binding site" evidence="1">
    <location>
        <position position="13"/>
    </location>
    <ligand>
        <name>CTP</name>
        <dbReference type="ChEBI" id="CHEBI:37563"/>
        <note>allosteric inhibitor</note>
    </ligand>
</feature>
<feature type="binding site" evidence="1">
    <location>
        <position position="13"/>
    </location>
    <ligand>
        <name>UTP</name>
        <dbReference type="ChEBI" id="CHEBI:46398"/>
    </ligand>
</feature>
<feature type="binding site" evidence="1">
    <location>
        <begin position="14"/>
        <end position="19"/>
    </location>
    <ligand>
        <name>ATP</name>
        <dbReference type="ChEBI" id="CHEBI:30616"/>
    </ligand>
</feature>
<feature type="binding site" evidence="1">
    <location>
        <position position="54"/>
    </location>
    <ligand>
        <name>L-glutamine</name>
        <dbReference type="ChEBI" id="CHEBI:58359"/>
    </ligand>
</feature>
<feature type="binding site" evidence="1">
    <location>
        <position position="71"/>
    </location>
    <ligand>
        <name>ATP</name>
        <dbReference type="ChEBI" id="CHEBI:30616"/>
    </ligand>
</feature>
<feature type="binding site" evidence="1">
    <location>
        <position position="71"/>
    </location>
    <ligand>
        <name>Mg(2+)</name>
        <dbReference type="ChEBI" id="CHEBI:18420"/>
    </ligand>
</feature>
<feature type="binding site" evidence="1">
    <location>
        <position position="141"/>
    </location>
    <ligand>
        <name>Mg(2+)</name>
        <dbReference type="ChEBI" id="CHEBI:18420"/>
    </ligand>
</feature>
<feature type="binding site" evidence="1">
    <location>
        <begin position="148"/>
        <end position="150"/>
    </location>
    <ligand>
        <name>CTP</name>
        <dbReference type="ChEBI" id="CHEBI:37563"/>
        <note>allosteric inhibitor</note>
    </ligand>
</feature>
<feature type="binding site" evidence="1">
    <location>
        <begin position="188"/>
        <end position="193"/>
    </location>
    <ligand>
        <name>CTP</name>
        <dbReference type="ChEBI" id="CHEBI:37563"/>
        <note>allosteric inhibitor</note>
    </ligand>
</feature>
<feature type="binding site" evidence="1">
    <location>
        <begin position="188"/>
        <end position="193"/>
    </location>
    <ligand>
        <name>UTP</name>
        <dbReference type="ChEBI" id="CHEBI:46398"/>
    </ligand>
</feature>
<feature type="binding site" evidence="1">
    <location>
        <position position="224"/>
    </location>
    <ligand>
        <name>CTP</name>
        <dbReference type="ChEBI" id="CHEBI:37563"/>
        <note>allosteric inhibitor</note>
    </ligand>
</feature>
<feature type="binding site" evidence="1">
    <location>
        <position position="224"/>
    </location>
    <ligand>
        <name>UTP</name>
        <dbReference type="ChEBI" id="CHEBI:46398"/>
    </ligand>
</feature>
<feature type="binding site" evidence="1">
    <location>
        <begin position="240"/>
        <end position="242"/>
    </location>
    <ligand>
        <name>ATP</name>
        <dbReference type="ChEBI" id="CHEBI:30616"/>
    </ligand>
</feature>
<feature type="binding site" evidence="1">
    <location>
        <position position="354"/>
    </location>
    <ligand>
        <name>L-glutamine</name>
        <dbReference type="ChEBI" id="CHEBI:58359"/>
    </ligand>
</feature>
<feature type="binding site" evidence="1">
    <location>
        <begin position="382"/>
        <end position="385"/>
    </location>
    <ligand>
        <name>L-glutamine</name>
        <dbReference type="ChEBI" id="CHEBI:58359"/>
    </ligand>
</feature>
<feature type="binding site" evidence="1">
    <location>
        <position position="405"/>
    </location>
    <ligand>
        <name>L-glutamine</name>
        <dbReference type="ChEBI" id="CHEBI:58359"/>
    </ligand>
</feature>
<feature type="binding site" evidence="1">
    <location>
        <position position="462"/>
    </location>
    <ligand>
        <name>L-glutamine</name>
        <dbReference type="ChEBI" id="CHEBI:58359"/>
    </ligand>
</feature>
<evidence type="ECO:0000255" key="1">
    <source>
        <dbReference type="HAMAP-Rule" id="MF_01227"/>
    </source>
</evidence>
<name>PYRG_BACC2</name>
<comment type="function">
    <text evidence="1">Catalyzes the ATP-dependent amination of UTP to CTP with either L-glutamine or ammonia as the source of nitrogen. Regulates intracellular CTP levels through interactions with the four ribonucleotide triphosphates.</text>
</comment>
<comment type="catalytic activity">
    <reaction evidence="1">
        <text>UTP + L-glutamine + ATP + H2O = CTP + L-glutamate + ADP + phosphate + 2 H(+)</text>
        <dbReference type="Rhea" id="RHEA:26426"/>
        <dbReference type="ChEBI" id="CHEBI:15377"/>
        <dbReference type="ChEBI" id="CHEBI:15378"/>
        <dbReference type="ChEBI" id="CHEBI:29985"/>
        <dbReference type="ChEBI" id="CHEBI:30616"/>
        <dbReference type="ChEBI" id="CHEBI:37563"/>
        <dbReference type="ChEBI" id="CHEBI:43474"/>
        <dbReference type="ChEBI" id="CHEBI:46398"/>
        <dbReference type="ChEBI" id="CHEBI:58359"/>
        <dbReference type="ChEBI" id="CHEBI:456216"/>
        <dbReference type="EC" id="6.3.4.2"/>
    </reaction>
</comment>
<comment type="catalytic activity">
    <reaction evidence="1">
        <text>L-glutamine + H2O = L-glutamate + NH4(+)</text>
        <dbReference type="Rhea" id="RHEA:15889"/>
        <dbReference type="ChEBI" id="CHEBI:15377"/>
        <dbReference type="ChEBI" id="CHEBI:28938"/>
        <dbReference type="ChEBI" id="CHEBI:29985"/>
        <dbReference type="ChEBI" id="CHEBI:58359"/>
    </reaction>
</comment>
<comment type="catalytic activity">
    <reaction evidence="1">
        <text>UTP + NH4(+) + ATP = CTP + ADP + phosphate + 2 H(+)</text>
        <dbReference type="Rhea" id="RHEA:16597"/>
        <dbReference type="ChEBI" id="CHEBI:15378"/>
        <dbReference type="ChEBI" id="CHEBI:28938"/>
        <dbReference type="ChEBI" id="CHEBI:30616"/>
        <dbReference type="ChEBI" id="CHEBI:37563"/>
        <dbReference type="ChEBI" id="CHEBI:43474"/>
        <dbReference type="ChEBI" id="CHEBI:46398"/>
        <dbReference type="ChEBI" id="CHEBI:456216"/>
    </reaction>
</comment>
<comment type="activity regulation">
    <text evidence="1">Allosterically activated by GTP, when glutamine is the substrate; GTP has no effect on the reaction when ammonia is the substrate. The allosteric effector GTP functions by stabilizing the protein conformation that binds the tetrahedral intermediate(s) formed during glutamine hydrolysis. Inhibited by the product CTP, via allosteric rather than competitive inhibition.</text>
</comment>
<comment type="pathway">
    <text evidence="1">Pyrimidine metabolism; CTP biosynthesis via de novo pathway; CTP from UDP: step 2/2.</text>
</comment>
<comment type="subunit">
    <text evidence="1">Homotetramer.</text>
</comment>
<comment type="miscellaneous">
    <text evidence="1">CTPSs have evolved a hybrid strategy for distinguishing between UTP and CTP. The overlapping regions of the product feedback inhibitory and substrate sites recognize a common feature in both compounds, the triphosphate moiety. To differentiate isosteric substrate and product pyrimidine rings, an additional pocket far from the expected kinase/ligase catalytic site, specifically recognizes the cytosine and ribose portions of the product inhibitor.</text>
</comment>
<comment type="similarity">
    <text evidence="1">Belongs to the CTP synthase family.</text>
</comment>
<protein>
    <recommendedName>
        <fullName evidence="1">CTP synthase</fullName>
        <ecNumber evidence="1">6.3.4.2</ecNumber>
    </recommendedName>
    <alternativeName>
        <fullName evidence="1">Cytidine 5'-triphosphate synthase</fullName>
    </alternativeName>
    <alternativeName>
        <fullName evidence="1">Cytidine triphosphate synthetase</fullName>
        <shortName evidence="1">CTP synthetase</shortName>
        <shortName evidence="1">CTPS</shortName>
    </alternativeName>
    <alternativeName>
        <fullName evidence="1">UTP--ammonia ligase</fullName>
    </alternativeName>
</protein>
<gene>
    <name evidence="1" type="primary">pyrG</name>
    <name type="ordered locus">BCG9842_B5491</name>
</gene>
<dbReference type="EC" id="6.3.4.2" evidence="1"/>
<dbReference type="EMBL" id="CP001186">
    <property type="protein sequence ID" value="ACK97344.1"/>
    <property type="molecule type" value="Genomic_DNA"/>
</dbReference>
<dbReference type="RefSeq" id="WP_000170448.1">
    <property type="nucleotide sequence ID" value="NC_011772.1"/>
</dbReference>
<dbReference type="SMR" id="B7IQZ1"/>
<dbReference type="KEGG" id="bcg:BCG9842_B5491"/>
<dbReference type="HOGENOM" id="CLU_011675_5_0_9"/>
<dbReference type="UniPathway" id="UPA00159">
    <property type="reaction ID" value="UER00277"/>
</dbReference>
<dbReference type="Proteomes" id="UP000006744">
    <property type="component" value="Chromosome"/>
</dbReference>
<dbReference type="GO" id="GO:0005829">
    <property type="term" value="C:cytosol"/>
    <property type="evidence" value="ECO:0007669"/>
    <property type="project" value="TreeGrafter"/>
</dbReference>
<dbReference type="GO" id="GO:0005524">
    <property type="term" value="F:ATP binding"/>
    <property type="evidence" value="ECO:0007669"/>
    <property type="project" value="UniProtKB-KW"/>
</dbReference>
<dbReference type="GO" id="GO:0003883">
    <property type="term" value="F:CTP synthase activity"/>
    <property type="evidence" value="ECO:0007669"/>
    <property type="project" value="UniProtKB-UniRule"/>
</dbReference>
<dbReference type="GO" id="GO:0004359">
    <property type="term" value="F:glutaminase activity"/>
    <property type="evidence" value="ECO:0007669"/>
    <property type="project" value="RHEA"/>
</dbReference>
<dbReference type="GO" id="GO:0042802">
    <property type="term" value="F:identical protein binding"/>
    <property type="evidence" value="ECO:0007669"/>
    <property type="project" value="TreeGrafter"/>
</dbReference>
<dbReference type="GO" id="GO:0046872">
    <property type="term" value="F:metal ion binding"/>
    <property type="evidence" value="ECO:0007669"/>
    <property type="project" value="UniProtKB-KW"/>
</dbReference>
<dbReference type="GO" id="GO:0044210">
    <property type="term" value="P:'de novo' CTP biosynthetic process"/>
    <property type="evidence" value="ECO:0007669"/>
    <property type="project" value="UniProtKB-UniRule"/>
</dbReference>
<dbReference type="GO" id="GO:0019856">
    <property type="term" value="P:pyrimidine nucleobase biosynthetic process"/>
    <property type="evidence" value="ECO:0007669"/>
    <property type="project" value="TreeGrafter"/>
</dbReference>
<dbReference type="CDD" id="cd03113">
    <property type="entry name" value="CTPS_N"/>
    <property type="match status" value="1"/>
</dbReference>
<dbReference type="CDD" id="cd01746">
    <property type="entry name" value="GATase1_CTP_Synthase"/>
    <property type="match status" value="1"/>
</dbReference>
<dbReference type="FunFam" id="3.40.50.300:FF:000009">
    <property type="entry name" value="CTP synthase"/>
    <property type="match status" value="1"/>
</dbReference>
<dbReference type="FunFam" id="3.40.50.880:FF:000002">
    <property type="entry name" value="CTP synthase"/>
    <property type="match status" value="1"/>
</dbReference>
<dbReference type="Gene3D" id="3.40.50.880">
    <property type="match status" value="1"/>
</dbReference>
<dbReference type="Gene3D" id="3.40.50.300">
    <property type="entry name" value="P-loop containing nucleotide triphosphate hydrolases"/>
    <property type="match status" value="1"/>
</dbReference>
<dbReference type="HAMAP" id="MF_01227">
    <property type="entry name" value="PyrG"/>
    <property type="match status" value="1"/>
</dbReference>
<dbReference type="InterPro" id="IPR029062">
    <property type="entry name" value="Class_I_gatase-like"/>
</dbReference>
<dbReference type="InterPro" id="IPR004468">
    <property type="entry name" value="CTP_synthase"/>
</dbReference>
<dbReference type="InterPro" id="IPR017456">
    <property type="entry name" value="CTP_synthase_N"/>
</dbReference>
<dbReference type="InterPro" id="IPR017926">
    <property type="entry name" value="GATASE"/>
</dbReference>
<dbReference type="InterPro" id="IPR033828">
    <property type="entry name" value="GATase1_CTP_Synthase"/>
</dbReference>
<dbReference type="InterPro" id="IPR027417">
    <property type="entry name" value="P-loop_NTPase"/>
</dbReference>
<dbReference type="NCBIfam" id="NF003792">
    <property type="entry name" value="PRK05380.1"/>
    <property type="match status" value="1"/>
</dbReference>
<dbReference type="NCBIfam" id="TIGR00337">
    <property type="entry name" value="PyrG"/>
    <property type="match status" value="1"/>
</dbReference>
<dbReference type="PANTHER" id="PTHR11550">
    <property type="entry name" value="CTP SYNTHASE"/>
    <property type="match status" value="1"/>
</dbReference>
<dbReference type="PANTHER" id="PTHR11550:SF0">
    <property type="entry name" value="CTP SYNTHASE-RELATED"/>
    <property type="match status" value="1"/>
</dbReference>
<dbReference type="Pfam" id="PF06418">
    <property type="entry name" value="CTP_synth_N"/>
    <property type="match status" value="1"/>
</dbReference>
<dbReference type="Pfam" id="PF00117">
    <property type="entry name" value="GATase"/>
    <property type="match status" value="1"/>
</dbReference>
<dbReference type="SUPFAM" id="SSF52317">
    <property type="entry name" value="Class I glutamine amidotransferase-like"/>
    <property type="match status" value="1"/>
</dbReference>
<dbReference type="SUPFAM" id="SSF52540">
    <property type="entry name" value="P-loop containing nucleoside triphosphate hydrolases"/>
    <property type="match status" value="1"/>
</dbReference>
<dbReference type="PROSITE" id="PS51273">
    <property type="entry name" value="GATASE_TYPE_1"/>
    <property type="match status" value="1"/>
</dbReference>
<proteinExistence type="inferred from homology"/>
<accession>B7IQZ1</accession>
<sequence length="535" mass="59806">MTKYIFVTGGVVSSLGKGITAASLGRLLKNRGLNVTIQKFDPYINVDPGTMSPYQHGEVFVTDDGAETDLDLGHYERFIDINLNKYSNVTTGKIYSSVLQKERRGEYLGGTVQVIPHITNEIKERVYRSGRETNADVVITEIGGTVGDIESLPFLEAIRQIKSDIGRDNVMYIHCTLIPYLKAAGEMKTKPTQHSVKELRSLGIQPNIIVVRTELPVSQDMKDKLALFCDIDTKAVIEARDADTLYAVPLSLQEQNMDQIVCDHLKLDNPAADMTEWTALVNKVRNLSKKTKIALVGKYVELQDAYISVVEALRHAGYSFDTDVEVKWVNAEHVTAENVQELVGDTDGILVPGGFGDRGVEGKIVAIQYARENKVPFLGICLGMQLASIEFARNVLGLEGANSSEINPDTPYAIIDLLPEQKDVEDLGGTLRLGLYPCKLSEETNAYNAYNEPVVYERHRHRYEFNNQFRPDMEKEGFVFSGTSPDGRLVEIIELKDHPWFVAAQFHPELVSRPNRPQPLFHDFVRASITNKESK</sequence>